<name>RRF_THEMA</name>
<feature type="chain" id="PRO_0000167565" description="Ribosome-recycling factor">
    <location>
        <begin position="1"/>
        <end position="185"/>
    </location>
</feature>
<feature type="helix" evidence="2">
    <location>
        <begin position="4"/>
        <end position="26"/>
    </location>
</feature>
<feature type="helix" evidence="2">
    <location>
        <begin position="34"/>
        <end position="37"/>
    </location>
</feature>
<feature type="strand" evidence="2">
    <location>
        <begin position="41"/>
        <end position="44"/>
    </location>
</feature>
<feature type="strand" evidence="2">
    <location>
        <begin position="47"/>
        <end position="50"/>
    </location>
</feature>
<feature type="helix" evidence="2">
    <location>
        <begin position="51"/>
        <end position="53"/>
    </location>
</feature>
<feature type="strand" evidence="2">
    <location>
        <begin position="54"/>
        <end position="59"/>
    </location>
</feature>
<feature type="strand" evidence="2">
    <location>
        <begin position="64"/>
        <end position="71"/>
    </location>
</feature>
<feature type="helix" evidence="2">
    <location>
        <begin position="74"/>
        <end position="84"/>
    </location>
</feature>
<feature type="strand" evidence="2">
    <location>
        <begin position="85"/>
        <end position="87"/>
    </location>
</feature>
<feature type="strand" evidence="2">
    <location>
        <begin position="98"/>
        <end position="101"/>
    </location>
</feature>
<feature type="helix" evidence="2">
    <location>
        <begin position="107"/>
        <end position="144"/>
    </location>
</feature>
<feature type="helix" evidence="2">
    <location>
        <begin position="150"/>
        <end position="183"/>
    </location>
</feature>
<dbReference type="EMBL" id="AE000512">
    <property type="protein sequence ID" value="AAD36470.1"/>
    <property type="molecule type" value="Genomic_DNA"/>
</dbReference>
<dbReference type="PIR" id="H72259">
    <property type="entry name" value="H72259"/>
</dbReference>
<dbReference type="RefSeq" id="NP_229200.1">
    <property type="nucleotide sequence ID" value="NC_000853.1"/>
</dbReference>
<dbReference type="RefSeq" id="WP_004081616.1">
    <property type="nucleotide sequence ID" value="NZ_CP011107.1"/>
</dbReference>
<dbReference type="PDB" id="1DD5">
    <property type="method" value="X-ray"/>
    <property type="resolution" value="2.55 A"/>
    <property type="chains" value="A=1-185"/>
</dbReference>
<dbReference type="PDBsum" id="1DD5"/>
<dbReference type="BMRB" id="Q9X1B9"/>
<dbReference type="SMR" id="Q9X1B9"/>
<dbReference type="FunCoup" id="Q9X1B9">
    <property type="interactions" value="425"/>
</dbReference>
<dbReference type="STRING" id="243274.TM_1399"/>
<dbReference type="PaxDb" id="243274-THEMA_07320"/>
<dbReference type="EnsemblBacteria" id="AAD36470">
    <property type="protein sequence ID" value="AAD36470"/>
    <property type="gene ID" value="TM_1399"/>
</dbReference>
<dbReference type="KEGG" id="tma:TM1399"/>
<dbReference type="KEGG" id="tmi:THEMA_07320"/>
<dbReference type="KEGG" id="tmm:Tmari_1406"/>
<dbReference type="KEGG" id="tmw:THMA_1428"/>
<dbReference type="eggNOG" id="COG0233">
    <property type="taxonomic scope" value="Bacteria"/>
</dbReference>
<dbReference type="InParanoid" id="Q9X1B9"/>
<dbReference type="OrthoDB" id="9804006at2"/>
<dbReference type="EvolutionaryTrace" id="Q9X1B9"/>
<dbReference type="Proteomes" id="UP000008183">
    <property type="component" value="Chromosome"/>
</dbReference>
<dbReference type="GO" id="GO:0005737">
    <property type="term" value="C:cytoplasm"/>
    <property type="evidence" value="ECO:0007669"/>
    <property type="project" value="UniProtKB-SubCell"/>
</dbReference>
<dbReference type="GO" id="GO:0043023">
    <property type="term" value="F:ribosomal large subunit binding"/>
    <property type="evidence" value="ECO:0000318"/>
    <property type="project" value="GO_Central"/>
</dbReference>
<dbReference type="GO" id="GO:0006412">
    <property type="term" value="P:translation"/>
    <property type="evidence" value="ECO:0000318"/>
    <property type="project" value="GO_Central"/>
</dbReference>
<dbReference type="GO" id="GO:0006415">
    <property type="term" value="P:translational termination"/>
    <property type="evidence" value="ECO:0007669"/>
    <property type="project" value="UniProtKB-UniRule"/>
</dbReference>
<dbReference type="CDD" id="cd00520">
    <property type="entry name" value="RRF"/>
    <property type="match status" value="1"/>
</dbReference>
<dbReference type="FunFam" id="1.10.132.20:FF:000001">
    <property type="entry name" value="Ribosome-recycling factor"/>
    <property type="match status" value="1"/>
</dbReference>
<dbReference type="FunFam" id="3.30.1360.40:FF:000001">
    <property type="entry name" value="Ribosome-recycling factor"/>
    <property type="match status" value="1"/>
</dbReference>
<dbReference type="Gene3D" id="3.30.1360.40">
    <property type="match status" value="1"/>
</dbReference>
<dbReference type="Gene3D" id="1.10.132.20">
    <property type="entry name" value="Ribosome-recycling factor"/>
    <property type="match status" value="1"/>
</dbReference>
<dbReference type="HAMAP" id="MF_00040">
    <property type="entry name" value="RRF"/>
    <property type="match status" value="1"/>
</dbReference>
<dbReference type="InterPro" id="IPR002661">
    <property type="entry name" value="Ribosome_recyc_fac"/>
</dbReference>
<dbReference type="InterPro" id="IPR023584">
    <property type="entry name" value="Ribosome_recyc_fac_dom"/>
</dbReference>
<dbReference type="InterPro" id="IPR036191">
    <property type="entry name" value="RRF_sf"/>
</dbReference>
<dbReference type="NCBIfam" id="TIGR00496">
    <property type="entry name" value="frr"/>
    <property type="match status" value="1"/>
</dbReference>
<dbReference type="PANTHER" id="PTHR20982:SF3">
    <property type="entry name" value="MITOCHONDRIAL RIBOSOME RECYCLING FACTOR PSEUDO 1"/>
    <property type="match status" value="1"/>
</dbReference>
<dbReference type="PANTHER" id="PTHR20982">
    <property type="entry name" value="RIBOSOME RECYCLING FACTOR"/>
    <property type="match status" value="1"/>
</dbReference>
<dbReference type="Pfam" id="PF01765">
    <property type="entry name" value="RRF"/>
    <property type="match status" value="1"/>
</dbReference>
<dbReference type="SUPFAM" id="SSF55194">
    <property type="entry name" value="Ribosome recycling factor, RRF"/>
    <property type="match status" value="1"/>
</dbReference>
<protein>
    <recommendedName>
        <fullName evidence="1">Ribosome-recycling factor</fullName>
        <shortName evidence="1">RRF</shortName>
    </recommendedName>
    <alternativeName>
        <fullName evidence="1">Ribosome-releasing factor</fullName>
    </alternativeName>
</protein>
<sequence>MVNPFIKEAKEKMKRTLEKIEDELRKMRTGKPSPAILEEIKVDYYGVPTPVNQLATISISEERTLVIKPWDKSVLSLIEKAINASDLGLNPINDGNVIRLVFPSPTTEQREKWVKKAKEIVEEGKIAIRNIRREILKKIKEDQKEGLIPEDDAKRLENEIQKLTDEFIEKLDEVFEIKKEEIMEF</sequence>
<organism>
    <name type="scientific">Thermotoga maritima (strain ATCC 43589 / DSM 3109 / JCM 10099 / NBRC 100826 / MSB8)</name>
    <dbReference type="NCBI Taxonomy" id="243274"/>
    <lineage>
        <taxon>Bacteria</taxon>
        <taxon>Thermotogati</taxon>
        <taxon>Thermotogota</taxon>
        <taxon>Thermotogae</taxon>
        <taxon>Thermotogales</taxon>
        <taxon>Thermotogaceae</taxon>
        <taxon>Thermotoga</taxon>
    </lineage>
</organism>
<reference key="1">
    <citation type="journal article" date="1999" name="Nature">
        <title>Evidence for lateral gene transfer between Archaea and Bacteria from genome sequence of Thermotoga maritima.</title>
        <authorList>
            <person name="Nelson K.E."/>
            <person name="Clayton R.A."/>
            <person name="Gill S.R."/>
            <person name="Gwinn M.L."/>
            <person name="Dodson R.J."/>
            <person name="Haft D.H."/>
            <person name="Hickey E.K."/>
            <person name="Peterson J.D."/>
            <person name="Nelson W.C."/>
            <person name="Ketchum K.A."/>
            <person name="McDonald L.A."/>
            <person name="Utterback T.R."/>
            <person name="Malek J.A."/>
            <person name="Linher K.D."/>
            <person name="Garrett M.M."/>
            <person name="Stewart A.M."/>
            <person name="Cotton M.D."/>
            <person name="Pratt M.S."/>
            <person name="Phillips C.A."/>
            <person name="Richardson D.L."/>
            <person name="Heidelberg J.F."/>
            <person name="Sutton G.G."/>
            <person name="Fleischmann R.D."/>
            <person name="Eisen J.A."/>
            <person name="White O."/>
            <person name="Salzberg S.L."/>
            <person name="Smith H.O."/>
            <person name="Venter J.C."/>
            <person name="Fraser C.M."/>
        </authorList>
    </citation>
    <scope>NUCLEOTIDE SEQUENCE [LARGE SCALE GENOMIC DNA]</scope>
    <source>
        <strain>ATCC 43589 / DSM 3109 / JCM 10099 / NBRC 100826 / MSB8</strain>
    </source>
</reference>
<reference key="2">
    <citation type="journal article" date="1999" name="Science">
        <title>Crystal structure of Thermotoga maritima ribosome recycling factor: a tRNA mimic.</title>
        <authorList>
            <person name="Selmer M."/>
            <person name="Al-Karadaghi S."/>
            <person name="Hirokawa G."/>
            <person name="Kaji A."/>
            <person name="Liljas A."/>
        </authorList>
    </citation>
    <scope>X-RAY CRYSTALLOGRAPHY (2.55 ANGSTROMS)</scope>
</reference>
<evidence type="ECO:0000255" key="1">
    <source>
        <dbReference type="HAMAP-Rule" id="MF_00040"/>
    </source>
</evidence>
<evidence type="ECO:0007829" key="2">
    <source>
        <dbReference type="PDB" id="1DD5"/>
    </source>
</evidence>
<accession>Q9X1B9</accession>
<keyword id="KW-0002">3D-structure</keyword>
<keyword id="KW-0963">Cytoplasm</keyword>
<keyword id="KW-0648">Protein biosynthesis</keyword>
<keyword id="KW-1185">Reference proteome</keyword>
<comment type="function">
    <text evidence="1">Responsible for the release of ribosomes from messenger RNA at the termination of protein biosynthesis. May increase the efficiency of translation by recycling ribosomes from one round of translation to another.</text>
</comment>
<comment type="subcellular location">
    <subcellularLocation>
        <location evidence="1">Cytoplasm</location>
    </subcellularLocation>
</comment>
<comment type="similarity">
    <text evidence="1">Belongs to the RRF family.</text>
</comment>
<proteinExistence type="evidence at protein level"/>
<gene>
    <name evidence="1" type="primary">frr</name>
    <name type="ordered locus">TM_1399</name>
</gene>